<comment type="function">
    <text evidence="4 7 8 9 10">Functions as a cell surface receptor for TIMP1 and plays a role in the activation of cellular signaling cascades. Plays a role in the activation of ITGB1 and integrin signaling, leading to the activation of AKT, FAK/PTK2 and MAP kinases. Promotes cell survival, reorganization of the actin cytoskeleton, cell adhesion, spreading and migration, via its role in the activation of AKT and FAK/PTK2. Plays a role in VEGFA signaling via its role in regulating the internalization of KDR/VEGFR2. Plays a role in intracellular vesicular transport processes, and is required for normal trafficking of the PMEL luminal domain that is essential for the development and maturation of melanocytes. Plays a role in the adhesion of leukocytes onto endothelial cells via its role in the regulation of SELP trafficking. May play a role in mast cell degranulation in response to Ms4a2/FceRI stimulation, but not in mast cell degranulation in response to other stimuli.</text>
</comment>
<comment type="subunit">
    <text evidence="1 6">Interacts with TIMP1 and ITGB1 and recruits TIMP1 to ITGB1. Interacts with CD9. Identified in a complex with CD9 and ITGB3. Interacts with PMEL. Interacts with KDR/VEGFR2; identified in a complex with ITGB1 and KDR/VEGFR2 and is required to recruit KDR to ITGB1 complexes (By similarity). Interacts with SYT7 (PubMed:21041449).</text>
</comment>
<comment type="subcellular location">
    <subcellularLocation>
        <location evidence="2">Cell membrane</location>
        <topology evidence="3">Multi-pass membrane protein</topology>
    </subcellularLocation>
    <subcellularLocation>
        <location evidence="4 6 10">Lysosome membrane</location>
        <topology evidence="3">Multi-pass membrane protein</topology>
    </subcellularLocation>
    <subcellularLocation>
        <location evidence="10">Late endosome membrane</location>
        <topology evidence="3">Multi-pass membrane protein</topology>
    </subcellularLocation>
    <subcellularLocation>
        <location evidence="2">Endosome</location>
        <location evidence="2">Multivesicular body</location>
    </subcellularLocation>
    <subcellularLocation>
        <location evidence="2">Melanosome</location>
    </subcellularLocation>
    <subcellularLocation>
        <location evidence="11">Secreted</location>
        <location evidence="11">Extracellular exosome</location>
    </subcellularLocation>
    <subcellularLocation>
        <location evidence="2">Cell surface</location>
    </subcellularLocation>
    <text evidence="2">Also found in Weibel-Palade bodies of endothelial cells. Located in platelet dense granules. Detected in a subset of pre-melanosomes. Detected on intralumenal vesicles (ILVs) within multivesicular bodies.</text>
</comment>
<comment type="tissue specificity">
    <text>Ubiquitous. Strongly expressed in kidney. Detected in spleen, bone marrow, peripheral blood mononuclear cells and macrophages.</text>
</comment>
<comment type="PTM">
    <text evidence="1">Palmitoylated at a low, basal level in unstimulated platelets. The level of palmitoylation increases when platelets are activated by thrombin (in vitro) (By similarity).</text>
</comment>
<comment type="disruption phenotype">
    <text evidence="4 7 8 9 10">No visible phenotype. Mutant mice are viable and fertile, but display impaired water homeostasis, with increased urinary flow, increased water intake, reduced urine osmolality and increased fecal water content. Mice display inclusions in the principal cells in the renal collecting duct (PubMed:19075008). Mutant mice display variable graying of their coat color and a dramatic reduction in the number of melanosomes in the retinal pigment epithelium (PubMed:21962903). According to PubMed:21803846, mutant mice display a defect in the Selp-dependent attachment of leukocytes to endothelial cells. According to PubMed:23945142, mast cells from mutant mice show decreased degranulation and decreased release of TNF in response to Ms4a2/FceRI stimulation, but no difference in mast cell degranulation in response to other stimuli and no change in the release of IL6 and leukotriene C4.</text>
</comment>
<comment type="similarity">
    <text evidence="12">Belongs to the tetraspanin (TM4SF) family.</text>
</comment>
<keyword id="KW-1003">Cell membrane</keyword>
<keyword id="KW-0967">Endosome</keyword>
<keyword id="KW-0325">Glycoprotein</keyword>
<keyword id="KW-0449">Lipoprotein</keyword>
<keyword id="KW-0458">Lysosome</keyword>
<keyword id="KW-0472">Membrane</keyword>
<keyword id="KW-0564">Palmitate</keyword>
<keyword id="KW-0653">Protein transport</keyword>
<keyword id="KW-1185">Reference proteome</keyword>
<keyword id="KW-0964">Secreted</keyword>
<keyword id="KW-0812">Transmembrane</keyword>
<keyword id="KW-1133">Transmembrane helix</keyword>
<keyword id="KW-0813">Transport</keyword>
<name>CD63_MOUSE</name>
<sequence length="238" mass="25767">MAVEGGMKCVKFLLYVLLLAFCACAVGLIAIGVAVQVVLKQAITHETTAGSLLPVVIIAVGAFLFLVAFVGCCGACKENYCLMITFAIFLSLIMLVEVAVAIAGYVFRDQVKSEFNKSFQQQMQNYLKDNKTATILDKLQKENNCCGASNYTDWENIPGMAKDRVPDSCCINITVGCGNDFKESTIHTQGCVETIAIWLRKNILLVAAAALGIAFVEVLGIIFSCCLVKSIRSGYEVM</sequence>
<gene>
    <name type="primary">Cd63</name>
</gene>
<reference key="1">
    <citation type="journal article" date="1994" name="Biochim. Biophys. Acta">
        <title>Molecular cloning of the murine homologue of CD63/ME491 and detection of its strong expression in the kidney and activated macrophages.</title>
        <authorList>
            <person name="Miyamoto M."/>
            <person name="Homma M."/>
            <person name="Hotta H."/>
        </authorList>
    </citation>
    <scope>NUCLEOTIDE SEQUENCE [MRNA]</scope>
</reference>
<reference key="2">
    <citation type="journal article" date="2004" name="Genome Res.">
        <title>The status, quality, and expansion of the NIH full-length cDNA project: the Mammalian Gene Collection (MGC).</title>
        <authorList>
            <consortium name="The MGC Project Team"/>
        </authorList>
    </citation>
    <scope>NUCLEOTIDE SEQUENCE [LARGE SCALE MRNA]</scope>
    <source>
        <strain>FVB/N</strain>
        <tissue>Colon</tissue>
        <tissue>Mammary gland</tissue>
    </source>
</reference>
<reference key="3">
    <citation type="journal article" date="2009" name="Mol. Cell. Biol.">
        <title>Deficiency of the tetraspanin CD63 associated with kidney pathology but normal lysosomal function.</title>
        <authorList>
            <person name="Schroder J."/>
            <person name="Lullmann-Rauch R."/>
            <person name="Himmerkus N."/>
            <person name="Pleines I."/>
            <person name="Nieswandt B."/>
            <person name="Orinska Z."/>
            <person name="Koch-Nolte F."/>
            <person name="Schroder B."/>
            <person name="Bleich M."/>
            <person name="Saftig P."/>
        </authorList>
    </citation>
    <scope>DISRUPTION PHENOTYPE</scope>
    <scope>SUBCELLULAR LOCATION</scope>
    <scope>FUNCTION</scope>
</reference>
<reference key="4">
    <citation type="journal article" date="2009" name="Nat. Biotechnol.">
        <title>Mass-spectrometric identification and relative quantification of N-linked cell surface glycoproteins.</title>
        <authorList>
            <person name="Wollscheid B."/>
            <person name="Bausch-Fluck D."/>
            <person name="Henderson C."/>
            <person name="O'Brien R."/>
            <person name="Bibel M."/>
            <person name="Schiess R."/>
            <person name="Aebersold R."/>
            <person name="Watts J.D."/>
        </authorList>
    </citation>
    <scope>GLYCOSYLATION [LARGE SCALE ANALYSIS] AT ASN-130</scope>
</reference>
<reference key="5">
    <citation type="journal article" date="2010" name="Cell">
        <title>A tissue-specific atlas of mouse protein phosphorylation and expression.</title>
        <authorList>
            <person name="Huttlin E.L."/>
            <person name="Jedrychowski M.P."/>
            <person name="Elias J.E."/>
            <person name="Goswami T."/>
            <person name="Rad R."/>
            <person name="Beausoleil S.A."/>
            <person name="Villen J."/>
            <person name="Haas W."/>
            <person name="Sowa M.E."/>
            <person name="Gygi S.P."/>
        </authorList>
    </citation>
    <scope>IDENTIFICATION BY MASS SPECTROMETRY [LARGE SCALE ANALYSIS]</scope>
    <source>
        <tissue>Kidney</tissue>
        <tissue>Lung</tissue>
        <tissue>Spleen</tissue>
    </source>
</reference>
<reference key="6">
    <citation type="journal article" date="2010" name="J. Cell Biol.">
        <title>Palmitoylation-dependent association with CD63 targets the Ca2+ sensor synaptotagmin VII to lysosomes.</title>
        <authorList>
            <person name="Flannery A.R."/>
            <person name="Czibener C."/>
            <person name="Andrews N.W."/>
        </authorList>
    </citation>
    <scope>INTERACTION WITH SYT7</scope>
    <scope>SUBCELLULAR LOCATION</scope>
    <scope>MUTAGENESIS OF TYR-235</scope>
</reference>
<reference key="7">
    <citation type="journal article" date="2011" name="Blood">
        <title>CD63 is an essential cofactor to leukocyte recruitment by endothelial P-selectin.</title>
        <authorList>
            <person name="Doyle E.L."/>
            <person name="Ridger V."/>
            <person name="Ferraro F."/>
            <person name="Turmaine M."/>
            <person name="Saftig P."/>
            <person name="Cutler D.F."/>
        </authorList>
    </citation>
    <scope>DISRUPTION PHENOTYPE</scope>
    <scope>FUNCTION</scope>
</reference>
<reference key="8">
    <citation type="journal article" date="2011" name="Dev. Cell">
        <title>The tetraspanin CD63 regulates ESCRT-independent and -dependent endosomal sorting during melanogenesis.</title>
        <authorList>
            <person name="van Niel G."/>
            <person name="Charrin S."/>
            <person name="Simoes S."/>
            <person name="Romao M."/>
            <person name="Rochin L."/>
            <person name="Saftig P."/>
            <person name="Marks M.S."/>
            <person name="Rubinstein E."/>
            <person name="Raposo G."/>
        </authorList>
    </citation>
    <scope>FUNCTION IN MELANOCYTE DEVELOPMENT</scope>
    <scope>DISRUPTION PHENOTYPE</scope>
</reference>
<reference key="9">
    <citation type="journal article" date="2013" name="J. Biol. Chem.">
        <title>Tetraspanin CD63 promotes vascular endothelial growth factor receptor 2-beta1 integrin complex formation, thereby regulating activation and downstream signaling in endothelial cells in vitro and in vivo.</title>
        <authorList>
            <person name="Tugues S."/>
            <person name="Honjo S."/>
            <person name="Konig C."/>
            <person name="Padhan N."/>
            <person name="Kroon J."/>
            <person name="Gualandi L."/>
            <person name="Li X."/>
            <person name="Barkefors I."/>
            <person name="Thijssen V.L."/>
            <person name="Griffioen A.W."/>
            <person name="Claesson-Welsh L."/>
        </authorList>
    </citation>
    <scope>FUNCTION</scope>
    <scope>DISRUPTION PHENOTYPE</scope>
</reference>
<reference key="10">
    <citation type="journal article" date="2013" name="J. Immunol.">
        <title>The tetraspanin CD63 is required for efficient IgE-mediated mast cell degranulation and anaphylaxis.</title>
        <authorList>
            <person name="Kraft S."/>
            <person name="Jouvin M.H."/>
            <person name="Kulkarni N."/>
            <person name="Kissing S."/>
            <person name="Morgan E.S."/>
            <person name="Dvorak A.M."/>
            <person name="Schroder B."/>
            <person name="Saftig P."/>
            <person name="Kinet J.P."/>
        </authorList>
    </citation>
    <scope>FUNCTION</scope>
    <scope>DISRUPTION PHENOTYPE</scope>
    <scope>SUBCELLULAR LOCATION</scope>
</reference>
<reference key="11">
    <citation type="journal article" date="2015" name="J. Immunol.">
        <title>Bacterial membrane vesicles mediate the release of Mycobacterium tuberculosis lipoglycans and lipoproteins from infected macrophages.</title>
        <authorList>
            <person name="Athman J.J."/>
            <person name="Wang Y."/>
            <person name="McDonald D.J."/>
            <person name="Boom W.H."/>
            <person name="Harding C.V."/>
            <person name="Wearsch P.A."/>
        </authorList>
    </citation>
    <scope>SUBCELLULAR LOCATION</scope>
    <source>
        <tissue>Macrophage</tissue>
    </source>
</reference>
<accession>P41731</accession>
<organism>
    <name type="scientific">Mus musculus</name>
    <name type="common">Mouse</name>
    <dbReference type="NCBI Taxonomy" id="10090"/>
    <lineage>
        <taxon>Eukaryota</taxon>
        <taxon>Metazoa</taxon>
        <taxon>Chordata</taxon>
        <taxon>Craniata</taxon>
        <taxon>Vertebrata</taxon>
        <taxon>Euteleostomi</taxon>
        <taxon>Mammalia</taxon>
        <taxon>Eutheria</taxon>
        <taxon>Euarchontoglires</taxon>
        <taxon>Glires</taxon>
        <taxon>Rodentia</taxon>
        <taxon>Myomorpha</taxon>
        <taxon>Muroidea</taxon>
        <taxon>Muridae</taxon>
        <taxon>Murinae</taxon>
        <taxon>Mus</taxon>
        <taxon>Mus</taxon>
    </lineage>
</organism>
<protein>
    <recommendedName>
        <fullName>CD63 antigen</fullName>
    </recommendedName>
    <cdAntigenName>CD63</cdAntigenName>
</protein>
<evidence type="ECO:0000250" key="1"/>
<evidence type="ECO:0000250" key="2">
    <source>
        <dbReference type="UniProtKB" id="P08962"/>
    </source>
</evidence>
<evidence type="ECO:0000255" key="3"/>
<evidence type="ECO:0000269" key="4">
    <source>
    </source>
</evidence>
<evidence type="ECO:0000269" key="5">
    <source>
    </source>
</evidence>
<evidence type="ECO:0000269" key="6">
    <source>
    </source>
</evidence>
<evidence type="ECO:0000269" key="7">
    <source>
    </source>
</evidence>
<evidence type="ECO:0000269" key="8">
    <source>
    </source>
</evidence>
<evidence type="ECO:0000269" key="9">
    <source>
    </source>
</evidence>
<evidence type="ECO:0000269" key="10">
    <source>
    </source>
</evidence>
<evidence type="ECO:0000269" key="11">
    <source>
    </source>
</evidence>
<evidence type="ECO:0000305" key="12"/>
<proteinExistence type="evidence at protein level"/>
<feature type="chain" id="PRO_0000219217" description="CD63 antigen">
    <location>
        <begin position="1"/>
        <end position="238"/>
    </location>
</feature>
<feature type="topological domain" description="Cytoplasmic" evidence="3">
    <location>
        <begin position="1"/>
        <end position="11"/>
    </location>
</feature>
<feature type="transmembrane region" description="Helical" evidence="3">
    <location>
        <begin position="12"/>
        <end position="32"/>
    </location>
</feature>
<feature type="topological domain" description="Extracellular" evidence="3">
    <location>
        <begin position="33"/>
        <end position="51"/>
    </location>
</feature>
<feature type="transmembrane region" description="Helical" evidence="3">
    <location>
        <begin position="52"/>
        <end position="72"/>
    </location>
</feature>
<feature type="topological domain" description="Cytoplasmic" evidence="3">
    <location>
        <begin position="73"/>
        <end position="81"/>
    </location>
</feature>
<feature type="transmembrane region" description="Helical" evidence="3">
    <location>
        <begin position="82"/>
        <end position="102"/>
    </location>
</feature>
<feature type="topological domain" description="Extracellular" evidence="3">
    <location>
        <begin position="103"/>
        <end position="203"/>
    </location>
</feature>
<feature type="transmembrane region" description="Helical" evidence="3">
    <location>
        <begin position="204"/>
        <end position="224"/>
    </location>
</feature>
<feature type="topological domain" description="Cytoplasmic" evidence="3">
    <location>
        <begin position="225"/>
        <end position="238"/>
    </location>
</feature>
<feature type="short sequence motif" description="Lysosomal targeting motif" evidence="6">
    <location>
        <begin position="234"/>
        <end position="238"/>
    </location>
</feature>
<feature type="glycosylation site" description="N-linked (GlcNAc...) asparagine" evidence="3">
    <location>
        <position position="116"/>
    </location>
</feature>
<feature type="glycosylation site" description="N-linked (GlcNAc...) asparagine" evidence="5">
    <location>
        <position position="130"/>
    </location>
</feature>
<feature type="glycosylation site" description="N-linked (GlcNAc...) asparagine" evidence="3">
    <location>
        <position position="150"/>
    </location>
</feature>
<feature type="glycosylation site" description="N-linked (GlcNAc...) asparagine" evidence="3">
    <location>
        <position position="172"/>
    </location>
</feature>
<feature type="mutagenesis site" description="Abolishes localization to lysosomes." evidence="6">
    <original>Y</original>
    <variation>A</variation>
    <location>
        <position position="235"/>
    </location>
</feature>
<dbReference type="EMBL" id="D16432">
    <property type="protein sequence ID" value="BAA03904.1"/>
    <property type="molecule type" value="mRNA"/>
</dbReference>
<dbReference type="EMBL" id="BC008108">
    <property type="protein sequence ID" value="AAH08108.1"/>
    <property type="molecule type" value="mRNA"/>
</dbReference>
<dbReference type="EMBL" id="BC012212">
    <property type="protein sequence ID" value="AAH12212.1"/>
    <property type="molecule type" value="mRNA"/>
</dbReference>
<dbReference type="EMBL" id="BC083161">
    <property type="protein sequence ID" value="AAH83161.1"/>
    <property type="molecule type" value="mRNA"/>
</dbReference>
<dbReference type="CCDS" id="CCDS24297.1"/>
<dbReference type="PIR" id="S43511">
    <property type="entry name" value="S43511"/>
</dbReference>
<dbReference type="RefSeq" id="NP_001036045.1">
    <property type="nucleotide sequence ID" value="NM_001042580.2"/>
</dbReference>
<dbReference type="RefSeq" id="NP_001269895.1">
    <property type="nucleotide sequence ID" value="NM_001282966.2"/>
</dbReference>
<dbReference type="RefSeq" id="NP_001415337.1">
    <property type="nucleotide sequence ID" value="NM_001428408.1"/>
</dbReference>
<dbReference type="RefSeq" id="NP_001415338.1">
    <property type="nucleotide sequence ID" value="NM_001428409.1"/>
</dbReference>
<dbReference type="RefSeq" id="NP_031679.1">
    <property type="nucleotide sequence ID" value="NM_007653.4"/>
</dbReference>
<dbReference type="RefSeq" id="XP_030100711.1">
    <property type="nucleotide sequence ID" value="XM_030244851.1"/>
</dbReference>
<dbReference type="RefSeq" id="XP_030100712.1">
    <property type="nucleotide sequence ID" value="XM_030244852.1"/>
</dbReference>
<dbReference type="RefSeq" id="XP_036011463.1">
    <property type="nucleotide sequence ID" value="XM_036155570.1"/>
</dbReference>
<dbReference type="SMR" id="P41731"/>
<dbReference type="BioGRID" id="198606">
    <property type="interactions" value="9"/>
</dbReference>
<dbReference type="FunCoup" id="P41731">
    <property type="interactions" value="556"/>
</dbReference>
<dbReference type="IntAct" id="P41731">
    <property type="interactions" value="2"/>
</dbReference>
<dbReference type="STRING" id="10090.ENSMUSP00000151313"/>
<dbReference type="GlyCosmos" id="P41731">
    <property type="glycosylation" value="4 sites, No reported glycans"/>
</dbReference>
<dbReference type="GlyGen" id="P41731">
    <property type="glycosylation" value="4 sites, 3 N-linked glycans (3 sites)"/>
</dbReference>
<dbReference type="iPTMnet" id="P41731"/>
<dbReference type="PhosphoSitePlus" id="P41731"/>
<dbReference type="SwissPalm" id="P41731"/>
<dbReference type="jPOST" id="P41731"/>
<dbReference type="PaxDb" id="10090-ENSMUSP00000100862"/>
<dbReference type="PeptideAtlas" id="P41731"/>
<dbReference type="ProteomicsDB" id="280027"/>
<dbReference type="Pumba" id="P41731"/>
<dbReference type="Antibodypedia" id="2770">
    <property type="antibodies" value="2228 antibodies from 51 providers"/>
</dbReference>
<dbReference type="DNASU" id="12512"/>
<dbReference type="Ensembl" id="ENSMUST00000026407.9">
    <property type="protein sequence ID" value="ENSMUSP00000026407.8"/>
    <property type="gene ID" value="ENSMUSG00000025351.15"/>
</dbReference>
<dbReference type="Ensembl" id="ENSMUST00000105229.9">
    <property type="protein sequence ID" value="ENSMUSP00000100862.2"/>
    <property type="gene ID" value="ENSMUSG00000025351.15"/>
</dbReference>
<dbReference type="Ensembl" id="ENSMUST00000219317.2">
    <property type="protein sequence ID" value="ENSMUSP00000151313.2"/>
    <property type="gene ID" value="ENSMUSG00000025351.15"/>
</dbReference>
<dbReference type="GeneID" id="12512"/>
<dbReference type="KEGG" id="mmu:12512"/>
<dbReference type="UCSC" id="uc007hou.1">
    <property type="organism name" value="mouse"/>
</dbReference>
<dbReference type="AGR" id="MGI:99529"/>
<dbReference type="CTD" id="967"/>
<dbReference type="MGI" id="MGI:99529">
    <property type="gene designation" value="Cd63"/>
</dbReference>
<dbReference type="VEuPathDB" id="HostDB:ENSMUSG00000025351"/>
<dbReference type="eggNOG" id="KOG3882">
    <property type="taxonomic scope" value="Eukaryota"/>
</dbReference>
<dbReference type="GeneTree" id="ENSGT00940000156832"/>
<dbReference type="HOGENOM" id="CLU_055524_6_1_1"/>
<dbReference type="InParanoid" id="P41731"/>
<dbReference type="OMA" id="RSWDIMQ"/>
<dbReference type="OrthoDB" id="10033535at2759"/>
<dbReference type="PhylomeDB" id="P41731"/>
<dbReference type="TreeFam" id="TF316345"/>
<dbReference type="Reactome" id="R-MMU-114608">
    <property type="pathway name" value="Platelet degranulation"/>
</dbReference>
<dbReference type="Reactome" id="R-MMU-6798695">
    <property type="pathway name" value="Neutrophil degranulation"/>
</dbReference>
<dbReference type="BioGRID-ORCS" id="12512">
    <property type="hits" value="2 hits in 82 CRISPR screens"/>
</dbReference>
<dbReference type="ChiTaRS" id="Cd63">
    <property type="organism name" value="mouse"/>
</dbReference>
<dbReference type="PRO" id="PR:P41731"/>
<dbReference type="Proteomes" id="UP000000589">
    <property type="component" value="Chromosome 10"/>
</dbReference>
<dbReference type="RNAct" id="P41731">
    <property type="molecule type" value="protein"/>
</dbReference>
<dbReference type="Bgee" id="ENSMUSG00000025351">
    <property type="expression patterns" value="Expressed in right kidney and 70 other cell types or tissues"/>
</dbReference>
<dbReference type="ExpressionAtlas" id="P41731">
    <property type="expression patterns" value="baseline and differential"/>
</dbReference>
<dbReference type="GO" id="GO:0009986">
    <property type="term" value="C:cell surface"/>
    <property type="evidence" value="ECO:0000266"/>
    <property type="project" value="MGI"/>
</dbReference>
<dbReference type="GO" id="GO:0031904">
    <property type="term" value="C:endosome lumen"/>
    <property type="evidence" value="ECO:0007669"/>
    <property type="project" value="Ensembl"/>
</dbReference>
<dbReference type="GO" id="GO:0010008">
    <property type="term" value="C:endosome membrane"/>
    <property type="evidence" value="ECO:0000266"/>
    <property type="project" value="MGI"/>
</dbReference>
<dbReference type="GO" id="GO:0070062">
    <property type="term" value="C:extracellular exosome"/>
    <property type="evidence" value="ECO:0007669"/>
    <property type="project" value="Ensembl"/>
</dbReference>
<dbReference type="GO" id="GO:0005770">
    <property type="term" value="C:late endosome"/>
    <property type="evidence" value="ECO:0000314"/>
    <property type="project" value="MGI"/>
</dbReference>
<dbReference type="GO" id="GO:0031902">
    <property type="term" value="C:late endosome membrane"/>
    <property type="evidence" value="ECO:0000250"/>
    <property type="project" value="UniProtKB"/>
</dbReference>
<dbReference type="GO" id="GO:0005765">
    <property type="term" value="C:lysosomal membrane"/>
    <property type="evidence" value="ECO:0000250"/>
    <property type="project" value="UniProtKB"/>
</dbReference>
<dbReference type="GO" id="GO:0005764">
    <property type="term" value="C:lysosome"/>
    <property type="evidence" value="ECO:0000314"/>
    <property type="project" value="MGI"/>
</dbReference>
<dbReference type="GO" id="GO:0042470">
    <property type="term" value="C:melanosome"/>
    <property type="evidence" value="ECO:0007669"/>
    <property type="project" value="UniProtKB-SubCell"/>
</dbReference>
<dbReference type="GO" id="GO:0032585">
    <property type="term" value="C:multivesicular body membrane"/>
    <property type="evidence" value="ECO:0000250"/>
    <property type="project" value="UniProtKB"/>
</dbReference>
<dbReference type="GO" id="GO:0097487">
    <property type="term" value="C:multivesicular body, internal vesicle"/>
    <property type="evidence" value="ECO:0000250"/>
    <property type="project" value="UniProtKB"/>
</dbReference>
<dbReference type="GO" id="GO:0005654">
    <property type="term" value="C:nucleoplasm"/>
    <property type="evidence" value="ECO:0007669"/>
    <property type="project" value="Ensembl"/>
</dbReference>
<dbReference type="GO" id="GO:0005886">
    <property type="term" value="C:plasma membrane"/>
    <property type="evidence" value="ECO:0000250"/>
    <property type="project" value="UniProtKB"/>
</dbReference>
<dbReference type="GO" id="GO:0032991">
    <property type="term" value="C:protein-containing complex"/>
    <property type="evidence" value="ECO:0007669"/>
    <property type="project" value="Ensembl"/>
</dbReference>
<dbReference type="GO" id="GO:0044877">
    <property type="term" value="F:protein-containing complex binding"/>
    <property type="evidence" value="ECO:0007669"/>
    <property type="project" value="Ensembl"/>
</dbReference>
<dbReference type="GO" id="GO:0016477">
    <property type="term" value="P:cell migration"/>
    <property type="evidence" value="ECO:0000250"/>
    <property type="project" value="UniProtKB"/>
</dbReference>
<dbReference type="GO" id="GO:0007160">
    <property type="term" value="P:cell-matrix adhesion"/>
    <property type="evidence" value="ECO:0000250"/>
    <property type="project" value="UniProtKB"/>
</dbReference>
<dbReference type="GO" id="GO:0035646">
    <property type="term" value="P:endosome to melanosome transport"/>
    <property type="evidence" value="ECO:0000250"/>
    <property type="project" value="UniProtKB"/>
</dbReference>
<dbReference type="GO" id="GO:0030855">
    <property type="term" value="P:epithelial cell differentiation"/>
    <property type="evidence" value="ECO:0007669"/>
    <property type="project" value="Ensembl"/>
</dbReference>
<dbReference type="GO" id="GO:0010633">
    <property type="term" value="P:negative regulation of epithelial cell migration"/>
    <property type="evidence" value="ECO:0007669"/>
    <property type="project" value="Ensembl"/>
</dbReference>
<dbReference type="GO" id="GO:0050931">
    <property type="term" value="P:pigment cell differentiation"/>
    <property type="evidence" value="ECO:0000315"/>
    <property type="project" value="UniProtKB"/>
</dbReference>
<dbReference type="GO" id="GO:0048757">
    <property type="term" value="P:pigment granule maturation"/>
    <property type="evidence" value="ECO:0000250"/>
    <property type="project" value="UniProtKB"/>
</dbReference>
<dbReference type="GO" id="GO:0043473">
    <property type="term" value="P:pigmentation"/>
    <property type="evidence" value="ECO:0000315"/>
    <property type="project" value="UniProtKB"/>
</dbReference>
<dbReference type="GO" id="GO:0045785">
    <property type="term" value="P:positive regulation of cell adhesion"/>
    <property type="evidence" value="ECO:0007669"/>
    <property type="project" value="Ensembl"/>
</dbReference>
<dbReference type="GO" id="GO:2001046">
    <property type="term" value="P:positive regulation of integrin-mediated signaling pathway"/>
    <property type="evidence" value="ECO:0000250"/>
    <property type="project" value="UniProtKB"/>
</dbReference>
<dbReference type="GO" id="GO:0002092">
    <property type="term" value="P:positive regulation of receptor internalization"/>
    <property type="evidence" value="ECO:0000250"/>
    <property type="project" value="UniProtKB"/>
</dbReference>
<dbReference type="GO" id="GO:0008104">
    <property type="term" value="P:protein localization"/>
    <property type="evidence" value="ECO:0000266"/>
    <property type="project" value="MGI"/>
</dbReference>
<dbReference type="GO" id="GO:0015031">
    <property type="term" value="P:protein transport"/>
    <property type="evidence" value="ECO:0007669"/>
    <property type="project" value="UniProtKB-KW"/>
</dbReference>
<dbReference type="GO" id="GO:1901379">
    <property type="term" value="P:regulation of potassium ion transmembrane transport"/>
    <property type="evidence" value="ECO:0000266"/>
    <property type="project" value="MGI"/>
</dbReference>
<dbReference type="GO" id="GO:1900746">
    <property type="term" value="P:regulation of vascular endothelial growth factor signaling pathway"/>
    <property type="evidence" value="ECO:0000315"/>
    <property type="project" value="UniProtKB"/>
</dbReference>
<dbReference type="CDD" id="cd03166">
    <property type="entry name" value="CD63_LEL"/>
    <property type="match status" value="1"/>
</dbReference>
<dbReference type="FunFam" id="1.10.1450.10:FF:000019">
    <property type="entry name" value="Tetraspanin"/>
    <property type="match status" value="1"/>
</dbReference>
<dbReference type="Gene3D" id="1.10.1450.10">
    <property type="entry name" value="Tetraspanin"/>
    <property type="match status" value="1"/>
</dbReference>
<dbReference type="InterPro" id="IPR042028">
    <property type="entry name" value="CD63_LEL"/>
</dbReference>
<dbReference type="InterPro" id="IPR018499">
    <property type="entry name" value="Tetraspanin/Peripherin"/>
</dbReference>
<dbReference type="InterPro" id="IPR000301">
    <property type="entry name" value="Tetraspanin_animals"/>
</dbReference>
<dbReference type="InterPro" id="IPR018503">
    <property type="entry name" value="Tetraspanin_CS"/>
</dbReference>
<dbReference type="InterPro" id="IPR008952">
    <property type="entry name" value="Tetraspanin_EC2_sf"/>
</dbReference>
<dbReference type="PANTHER" id="PTHR19282:SF471">
    <property type="entry name" value="CD63 ANTIGEN"/>
    <property type="match status" value="1"/>
</dbReference>
<dbReference type="PANTHER" id="PTHR19282">
    <property type="entry name" value="TETRASPANIN"/>
    <property type="match status" value="1"/>
</dbReference>
<dbReference type="Pfam" id="PF00335">
    <property type="entry name" value="Tetraspanin"/>
    <property type="match status" value="1"/>
</dbReference>
<dbReference type="PIRSF" id="PIRSF002419">
    <property type="entry name" value="Tetraspanin"/>
    <property type="match status" value="1"/>
</dbReference>
<dbReference type="PRINTS" id="PR00259">
    <property type="entry name" value="TMFOUR"/>
</dbReference>
<dbReference type="SUPFAM" id="SSF48652">
    <property type="entry name" value="Tetraspanin"/>
    <property type="match status" value="1"/>
</dbReference>
<dbReference type="PROSITE" id="PS00421">
    <property type="entry name" value="TM4_1"/>
    <property type="match status" value="1"/>
</dbReference>